<keyword id="KW-0067">ATP-binding</keyword>
<keyword id="KW-0170">Cobalt</keyword>
<keyword id="KW-0963">Cytoplasm</keyword>
<keyword id="KW-0460">Magnesium</keyword>
<keyword id="KW-0479">Metal-binding</keyword>
<keyword id="KW-0547">Nucleotide-binding</keyword>
<keyword id="KW-0554">One-carbon metabolism</keyword>
<keyword id="KW-0630">Potassium</keyword>
<keyword id="KW-0808">Transferase</keyword>
<comment type="function">
    <text evidence="5 8">Catalyzes the formation of S-adenosylmethionine from methionine and ATP. The reaction comprises two steps that are both catalyzed by the same enzyme: formation of S-adenosylmethionine (AdoMet) and triphosphate, and subsequent hydrolysis of the triphosphate (By similarity). May be involved in the synthesis of betain in response to abiotic stress such as high salinity (PubMed:15695433).</text>
</comment>
<comment type="catalytic activity">
    <reaction evidence="5">
        <text>L-methionine + ATP + H2O = S-adenosyl-L-methionine + phosphate + diphosphate</text>
        <dbReference type="Rhea" id="RHEA:21080"/>
        <dbReference type="ChEBI" id="CHEBI:15377"/>
        <dbReference type="ChEBI" id="CHEBI:30616"/>
        <dbReference type="ChEBI" id="CHEBI:33019"/>
        <dbReference type="ChEBI" id="CHEBI:43474"/>
        <dbReference type="ChEBI" id="CHEBI:57844"/>
        <dbReference type="ChEBI" id="CHEBI:59789"/>
        <dbReference type="EC" id="2.5.1.6"/>
    </reaction>
</comment>
<comment type="cofactor">
    <cofactor evidence="5">
        <name>Mn(2+)</name>
        <dbReference type="ChEBI" id="CHEBI:29035"/>
    </cofactor>
    <cofactor evidence="5">
        <name>Mg(2+)</name>
        <dbReference type="ChEBI" id="CHEBI:18420"/>
    </cofactor>
    <cofactor evidence="5">
        <name>Co(2+)</name>
        <dbReference type="ChEBI" id="CHEBI:48828"/>
    </cofactor>
    <text evidence="3 5">Binds 2 divalent ions per subunit. The metal ions interact primarily with the substrate (By similarity). Can utilize magnesium, manganese or cobalt (in vitro) (By similarity).</text>
</comment>
<comment type="cofactor">
    <cofactor evidence="5">
        <name>K(+)</name>
        <dbReference type="ChEBI" id="CHEBI:29103"/>
    </cofactor>
    <text evidence="3">Binds 1 potassium ion per subunit. The potassium ion interacts primarily with the substrate (By similarity).</text>
</comment>
<comment type="pathway">
    <text evidence="5">Amino-acid biosynthesis; S-adenosyl-L-methionine biosynthesis; S-adenosyl-L-methionine from L-methionine: step 1/1.</text>
</comment>
<comment type="subunit">
    <text evidence="1">Homotetramer.</text>
</comment>
<comment type="subcellular location">
    <subcellularLocation>
        <location evidence="1">Cytoplasm</location>
    </subcellularLocation>
</comment>
<comment type="tissue specificity">
    <text evidence="6">Expressed in roots, stems and leaves (at protein level).</text>
</comment>
<comment type="induction">
    <text evidence="6">By salt stress, in stems and leaves (at protein level). Follow a circadian regulation with higher levels in the light.</text>
</comment>
<comment type="similarity">
    <text evidence="7">Belongs to the AdoMet synthase family.</text>
</comment>
<name>METK4_ATRNU</name>
<evidence type="ECO:0000250" key="1"/>
<evidence type="ECO:0000250" key="2">
    <source>
        <dbReference type="UniProtKB" id="P0A817"/>
    </source>
</evidence>
<evidence type="ECO:0000250" key="3">
    <source>
        <dbReference type="UniProtKB" id="P13444"/>
    </source>
</evidence>
<evidence type="ECO:0000250" key="4">
    <source>
        <dbReference type="UniProtKB" id="Q00266"/>
    </source>
</evidence>
<evidence type="ECO:0000250" key="5">
    <source>
        <dbReference type="UniProtKB" id="Q96551"/>
    </source>
</evidence>
<evidence type="ECO:0000269" key="6">
    <source>
    </source>
</evidence>
<evidence type="ECO:0000305" key="7"/>
<evidence type="ECO:0000305" key="8">
    <source>
    </source>
</evidence>
<feature type="chain" id="PRO_0000363008" description="S-adenosylmethionine synthase 4">
    <location>
        <begin position="1"/>
        <end position="396"/>
    </location>
</feature>
<feature type="binding site" evidence="3">
    <location>
        <position position="13"/>
    </location>
    <ligand>
        <name>Mg(2+)</name>
        <dbReference type="ChEBI" id="CHEBI:18420"/>
    </ligand>
</feature>
<feature type="binding site" description="in other chain" evidence="4">
    <location>
        <position position="19"/>
    </location>
    <ligand>
        <name>ATP</name>
        <dbReference type="ChEBI" id="CHEBI:30616"/>
        <note>ligand shared between two neighboring subunits</note>
    </ligand>
</feature>
<feature type="binding site" evidence="2">
    <location>
        <position position="47"/>
    </location>
    <ligand>
        <name>K(+)</name>
        <dbReference type="ChEBI" id="CHEBI:29103"/>
    </ligand>
</feature>
<feature type="binding site" description="in other chain" evidence="2">
    <location>
        <position position="60"/>
    </location>
    <ligand>
        <name>L-methionine</name>
        <dbReference type="ChEBI" id="CHEBI:57844"/>
        <note>ligand shared between two neighboring subunits</note>
    </ligand>
</feature>
<feature type="binding site" description="in other chain" evidence="2">
    <location>
        <position position="103"/>
    </location>
    <ligand>
        <name>L-methionine</name>
        <dbReference type="ChEBI" id="CHEBI:57844"/>
        <note>ligand shared between two neighboring subunits</note>
    </ligand>
</feature>
<feature type="binding site" description="in other chain" evidence="4">
    <location>
        <begin position="171"/>
        <end position="173"/>
    </location>
    <ligand>
        <name>ATP</name>
        <dbReference type="ChEBI" id="CHEBI:30616"/>
        <note>ligand shared between two neighboring subunits</note>
    </ligand>
</feature>
<feature type="binding site" description="in other chain" evidence="4">
    <location>
        <begin position="239"/>
        <end position="242"/>
    </location>
    <ligand>
        <name>ATP</name>
        <dbReference type="ChEBI" id="CHEBI:30616"/>
        <note>ligand shared between two neighboring subunits</note>
    </ligand>
</feature>
<feature type="binding site" description="in other chain" evidence="4">
    <location>
        <position position="250"/>
    </location>
    <ligand>
        <name>ATP</name>
        <dbReference type="ChEBI" id="CHEBI:30616"/>
        <note>ligand shared between two neighboring subunits</note>
    </ligand>
</feature>
<feature type="binding site" evidence="2">
    <location>
        <position position="250"/>
    </location>
    <ligand>
        <name>L-methionine</name>
        <dbReference type="ChEBI" id="CHEBI:57844"/>
        <note>ligand shared between two neighboring subunits</note>
    </ligand>
</feature>
<feature type="binding site" description="in other chain" evidence="2">
    <location>
        <begin position="256"/>
        <end position="257"/>
    </location>
    <ligand>
        <name>ATP</name>
        <dbReference type="ChEBI" id="CHEBI:30616"/>
        <note>ligand shared between two neighboring subunits</note>
    </ligand>
</feature>
<feature type="binding site" evidence="2">
    <location>
        <position position="273"/>
    </location>
    <ligand>
        <name>ATP</name>
        <dbReference type="ChEBI" id="CHEBI:30616"/>
        <note>ligand shared between two neighboring subunits</note>
    </ligand>
</feature>
<feature type="binding site" evidence="2">
    <location>
        <position position="277"/>
    </location>
    <ligand>
        <name>ATP</name>
        <dbReference type="ChEBI" id="CHEBI:30616"/>
        <note>ligand shared between two neighboring subunits</note>
    </ligand>
</feature>
<feature type="binding site" evidence="3">
    <location>
        <position position="281"/>
    </location>
    <ligand>
        <name>ATP</name>
        <dbReference type="ChEBI" id="CHEBI:30616"/>
        <note>ligand shared between two neighboring subunits</note>
    </ligand>
</feature>
<feature type="binding site" description="in other chain" evidence="2">
    <location>
        <position position="281"/>
    </location>
    <ligand>
        <name>L-methionine</name>
        <dbReference type="ChEBI" id="CHEBI:57844"/>
        <note>ligand shared between two neighboring subunits</note>
    </ligand>
</feature>
<accession>Q6F3F1</accession>
<organism>
    <name type="scientific">Atriplex nummularia</name>
    <name type="common">Old man saltbush</name>
    <name type="synonym">Atriplex johnstonii</name>
    <dbReference type="NCBI Taxonomy" id="3553"/>
    <lineage>
        <taxon>Eukaryota</taxon>
        <taxon>Viridiplantae</taxon>
        <taxon>Streptophyta</taxon>
        <taxon>Embryophyta</taxon>
        <taxon>Tracheophyta</taxon>
        <taxon>Spermatophyta</taxon>
        <taxon>Magnoliopsida</taxon>
        <taxon>eudicotyledons</taxon>
        <taxon>Gunneridae</taxon>
        <taxon>Pentapetalae</taxon>
        <taxon>Caryophyllales</taxon>
        <taxon>Chenopodiaceae</taxon>
        <taxon>Chenopodioideae</taxon>
        <taxon>Atripliceae</taxon>
        <taxon>Atriplex</taxon>
    </lineage>
</organism>
<protein>
    <recommendedName>
        <fullName>S-adenosylmethionine synthase 4</fullName>
        <shortName>AdoMet synthase 4</shortName>
        <ecNumber evidence="5">2.5.1.6</ecNumber>
    </recommendedName>
    <alternativeName>
        <fullName>Methionine adenosyltransferase 4</fullName>
        <shortName>MAT 4</shortName>
    </alternativeName>
</protein>
<gene>
    <name type="primary">SAMS4</name>
</gene>
<dbReference type="EC" id="2.5.1.6" evidence="5"/>
<dbReference type="EMBL" id="AB183564">
    <property type="protein sequence ID" value="BAD29710.1"/>
    <property type="molecule type" value="mRNA"/>
</dbReference>
<dbReference type="SMR" id="Q6F3F1"/>
<dbReference type="BRENDA" id="2.5.1.6">
    <property type="organism ID" value="7740"/>
</dbReference>
<dbReference type="UniPathway" id="UPA00315">
    <property type="reaction ID" value="UER00080"/>
</dbReference>
<dbReference type="GO" id="GO:0005737">
    <property type="term" value="C:cytoplasm"/>
    <property type="evidence" value="ECO:0007669"/>
    <property type="project" value="UniProtKB-SubCell"/>
</dbReference>
<dbReference type="GO" id="GO:0005524">
    <property type="term" value="F:ATP binding"/>
    <property type="evidence" value="ECO:0007669"/>
    <property type="project" value="UniProtKB-KW"/>
</dbReference>
<dbReference type="GO" id="GO:0046872">
    <property type="term" value="F:metal ion binding"/>
    <property type="evidence" value="ECO:0007669"/>
    <property type="project" value="UniProtKB-KW"/>
</dbReference>
<dbReference type="GO" id="GO:0004478">
    <property type="term" value="F:methionine adenosyltransferase activity"/>
    <property type="evidence" value="ECO:0007669"/>
    <property type="project" value="UniProtKB-EC"/>
</dbReference>
<dbReference type="GO" id="GO:0006730">
    <property type="term" value="P:one-carbon metabolic process"/>
    <property type="evidence" value="ECO:0007669"/>
    <property type="project" value="UniProtKB-KW"/>
</dbReference>
<dbReference type="GO" id="GO:0006556">
    <property type="term" value="P:S-adenosylmethionine biosynthetic process"/>
    <property type="evidence" value="ECO:0007669"/>
    <property type="project" value="UniProtKB-UniPathway"/>
</dbReference>
<dbReference type="CDD" id="cd18079">
    <property type="entry name" value="S-AdoMet_synt"/>
    <property type="match status" value="1"/>
</dbReference>
<dbReference type="FunFam" id="3.30.300.10:FF:000001">
    <property type="entry name" value="S-adenosylmethionine synthase"/>
    <property type="match status" value="1"/>
</dbReference>
<dbReference type="FunFam" id="3.30.300.10:FF:000003">
    <property type="entry name" value="S-adenosylmethionine synthase"/>
    <property type="match status" value="1"/>
</dbReference>
<dbReference type="FunFam" id="3.30.300.10:FF:000004">
    <property type="entry name" value="S-adenosylmethionine synthase"/>
    <property type="match status" value="1"/>
</dbReference>
<dbReference type="Gene3D" id="3.30.300.10">
    <property type="match status" value="3"/>
</dbReference>
<dbReference type="HAMAP" id="MF_00086">
    <property type="entry name" value="S_AdoMet_synth1"/>
    <property type="match status" value="1"/>
</dbReference>
<dbReference type="InterPro" id="IPR022631">
    <property type="entry name" value="ADOMET_SYNTHASE_CS"/>
</dbReference>
<dbReference type="InterPro" id="IPR022630">
    <property type="entry name" value="S-AdoMet_synt_C"/>
</dbReference>
<dbReference type="InterPro" id="IPR022629">
    <property type="entry name" value="S-AdoMet_synt_central"/>
</dbReference>
<dbReference type="InterPro" id="IPR022628">
    <property type="entry name" value="S-AdoMet_synt_N"/>
</dbReference>
<dbReference type="InterPro" id="IPR002133">
    <property type="entry name" value="S-AdoMet_synthetase"/>
</dbReference>
<dbReference type="InterPro" id="IPR022636">
    <property type="entry name" value="S-AdoMet_synthetase_sfam"/>
</dbReference>
<dbReference type="NCBIfam" id="TIGR01034">
    <property type="entry name" value="metK"/>
    <property type="match status" value="1"/>
</dbReference>
<dbReference type="PANTHER" id="PTHR11964">
    <property type="entry name" value="S-ADENOSYLMETHIONINE SYNTHETASE"/>
    <property type="match status" value="1"/>
</dbReference>
<dbReference type="Pfam" id="PF02773">
    <property type="entry name" value="S-AdoMet_synt_C"/>
    <property type="match status" value="1"/>
</dbReference>
<dbReference type="Pfam" id="PF02772">
    <property type="entry name" value="S-AdoMet_synt_M"/>
    <property type="match status" value="1"/>
</dbReference>
<dbReference type="Pfam" id="PF00438">
    <property type="entry name" value="S-AdoMet_synt_N"/>
    <property type="match status" value="1"/>
</dbReference>
<dbReference type="PIRSF" id="PIRSF000497">
    <property type="entry name" value="MAT"/>
    <property type="match status" value="1"/>
</dbReference>
<dbReference type="SUPFAM" id="SSF55973">
    <property type="entry name" value="S-adenosylmethionine synthetase"/>
    <property type="match status" value="3"/>
</dbReference>
<dbReference type="PROSITE" id="PS00376">
    <property type="entry name" value="ADOMET_SYNTHASE_1"/>
    <property type="match status" value="1"/>
</dbReference>
<dbReference type="PROSITE" id="PS00377">
    <property type="entry name" value="ADOMET_SYNTHASE_2"/>
    <property type="match status" value="1"/>
</dbReference>
<reference key="1">
    <citation type="journal article" date="2005" name="Plant Cell Physiol.">
        <title>Similar regulation patterns of choline monooxygenase, phosphoethanolamine N-methyltransferase and S-adenosyl-L-methionine synthetase in leaves of the halophyte Atriplex nummularia L.</title>
        <authorList>
            <person name="Tabuchi T."/>
            <person name="Kawaguchi Y."/>
            <person name="Azuma T."/>
            <person name="Nanmori T."/>
            <person name="Yasuda T."/>
        </authorList>
    </citation>
    <scope>NUCLEOTIDE SEQUENCE [MRNA]</scope>
    <scope>FUNCTION</scope>
    <scope>TISSUE SPECIFICITY</scope>
    <scope>INDUCTION</scope>
    <source>
        <tissue>Shoot</tissue>
    </source>
</reference>
<sequence>MAAAVDTFLFTSESVNEGHPDKLCDQISDAVLDACLAQDPESKVACETCTKTNLVMVFGEITTKANVDYEKIVRQTCRDIGFVSADVGLDADNCKVLVYIEQQSPDIAQGVHGHLTRRPEEIGAGDQGHMFGYATDETPELMPLSHVLATKLGARLTEVRKNGTCPWLRPDGKTQVTVEYYNENGAMVPIRVHTVLISTQHDETVTNDEIAADLKEHVIKPVIPEKYLDEKTIFHLNPSGRFVIGGPHGDAGLTGRKIIIDTYGGWGAHGGGAFSGKDPTKVDRSGAYIARQAAKSIVAAGLARRCIVQISYAIGVPEPLSVFVDTYGTGKIPDKEILKIVKETFDFRPGMIAINLDLLKGGSRYLKTAAYGHFGRDDADFTWETVKPLKWEKPQA</sequence>
<proteinExistence type="evidence at protein level"/>